<gene>
    <name evidence="1" type="primary">chdC</name>
    <name type="ordered locus">TT_C1352</name>
</gene>
<protein>
    <recommendedName>
        <fullName evidence="1">Coproheme decarboxylase</fullName>
        <ecNumber evidence="1">1.3.98.5</ecNumber>
    </recommendedName>
    <alternativeName>
        <fullName evidence="1">Coproheme III oxidative decarboxylase</fullName>
    </alternativeName>
    <alternativeName>
        <fullName evidence="1">Hydrogen peroxide-dependent heme synthase</fullName>
    </alternativeName>
</protein>
<name>CHDC_THET2</name>
<evidence type="ECO:0000255" key="1">
    <source>
        <dbReference type="HAMAP-Rule" id="MF_01442"/>
    </source>
</evidence>
<sequence>MERHVPEPTHTLEGWHVLHDFRLLDFARWFSAPLEAREDAWEELKGLVREWRELEEAGQGSYGIYQVVGHKADLLFLNLRPGLDPLLEAEARLSRSAFARYLGRSYSFYSVVELGSQEKPLDPESPYVKPRLTPRVPKSGYVCFYPMNKRRQGQDNWYMLPAKERASLMKAHGETGRKYQGKVMQVISGAQGLDDWEWGVDLFSEDPVQFKKIVYEMRFDEVSARYGEFGPFFVGKYLDEEALRAFLGL</sequence>
<organism>
    <name type="scientific">Thermus thermophilus (strain ATCC BAA-163 / DSM 7039 / HB27)</name>
    <dbReference type="NCBI Taxonomy" id="262724"/>
    <lineage>
        <taxon>Bacteria</taxon>
        <taxon>Thermotogati</taxon>
        <taxon>Deinococcota</taxon>
        <taxon>Deinococci</taxon>
        <taxon>Thermales</taxon>
        <taxon>Thermaceae</taxon>
        <taxon>Thermus</taxon>
    </lineage>
</organism>
<proteinExistence type="inferred from homology"/>
<reference key="1">
    <citation type="journal article" date="2004" name="Nat. Biotechnol.">
        <title>The genome sequence of the extreme thermophile Thermus thermophilus.</title>
        <authorList>
            <person name="Henne A."/>
            <person name="Brueggemann H."/>
            <person name="Raasch C."/>
            <person name="Wiezer A."/>
            <person name="Hartsch T."/>
            <person name="Liesegang H."/>
            <person name="Johann A."/>
            <person name="Lienard T."/>
            <person name="Gohl O."/>
            <person name="Martinez-Arias R."/>
            <person name="Jacobi C."/>
            <person name="Starkuviene V."/>
            <person name="Schlenczeck S."/>
            <person name="Dencker S."/>
            <person name="Huber R."/>
            <person name="Klenk H.-P."/>
            <person name="Kramer W."/>
            <person name="Merkl R."/>
            <person name="Gottschalk G."/>
            <person name="Fritz H.-J."/>
        </authorList>
    </citation>
    <scope>NUCLEOTIDE SEQUENCE [LARGE SCALE GENOMIC DNA]</scope>
    <source>
        <strain>ATCC BAA-163 / DSM 7039 / HB27</strain>
    </source>
</reference>
<feature type="chain" id="PRO_0000294058" description="Coproheme decarboxylase">
    <location>
        <begin position="1"/>
        <end position="249"/>
    </location>
</feature>
<feature type="active site" evidence="1">
    <location>
        <position position="145"/>
    </location>
</feature>
<feature type="binding site" evidence="1">
    <location>
        <position position="131"/>
    </location>
    <ligand>
        <name>Fe-coproporphyrin III</name>
        <dbReference type="ChEBI" id="CHEBI:68438"/>
    </ligand>
</feature>
<feature type="binding site" evidence="1">
    <location>
        <begin position="145"/>
        <end position="149"/>
    </location>
    <ligand>
        <name>Fe-coproporphyrin III</name>
        <dbReference type="ChEBI" id="CHEBI:68438"/>
    </ligand>
</feature>
<feature type="binding site" description="axial binding residue" evidence="1">
    <location>
        <position position="172"/>
    </location>
    <ligand>
        <name>Fe-coproporphyrin III</name>
        <dbReference type="ChEBI" id="CHEBI:68438"/>
    </ligand>
    <ligandPart>
        <name>Fe</name>
        <dbReference type="ChEBI" id="CHEBI:18248"/>
    </ligandPart>
</feature>
<feature type="binding site" evidence="1">
    <location>
        <position position="185"/>
    </location>
    <ligand>
        <name>Fe-coproporphyrin III</name>
        <dbReference type="ChEBI" id="CHEBI:68438"/>
    </ligand>
</feature>
<feature type="binding site" evidence="1">
    <location>
        <position position="223"/>
    </location>
    <ligand>
        <name>Fe-coproporphyrin III</name>
        <dbReference type="ChEBI" id="CHEBI:68438"/>
    </ligand>
</feature>
<dbReference type="EC" id="1.3.98.5" evidence="1"/>
<dbReference type="EMBL" id="AE017221">
    <property type="protein sequence ID" value="AAS81694.1"/>
    <property type="molecule type" value="Genomic_DNA"/>
</dbReference>
<dbReference type="RefSeq" id="WP_011173736.1">
    <property type="nucleotide sequence ID" value="NC_005835.1"/>
</dbReference>
<dbReference type="SMR" id="Q72HY0"/>
<dbReference type="GeneID" id="3169367"/>
<dbReference type="KEGG" id="tth:TT_C1352"/>
<dbReference type="eggNOG" id="COG3253">
    <property type="taxonomic scope" value="Bacteria"/>
</dbReference>
<dbReference type="HOGENOM" id="CLU_063226_1_0_0"/>
<dbReference type="OrthoDB" id="9773646at2"/>
<dbReference type="UniPathway" id="UPA00252"/>
<dbReference type="Proteomes" id="UP000000592">
    <property type="component" value="Chromosome"/>
</dbReference>
<dbReference type="GO" id="GO:0020037">
    <property type="term" value="F:heme binding"/>
    <property type="evidence" value="ECO:0007669"/>
    <property type="project" value="InterPro"/>
</dbReference>
<dbReference type="GO" id="GO:0046872">
    <property type="term" value="F:metal ion binding"/>
    <property type="evidence" value="ECO:0007669"/>
    <property type="project" value="UniProtKB-KW"/>
</dbReference>
<dbReference type="GO" id="GO:0004601">
    <property type="term" value="F:peroxidase activity"/>
    <property type="evidence" value="ECO:0007669"/>
    <property type="project" value="InterPro"/>
</dbReference>
<dbReference type="GO" id="GO:0006783">
    <property type="term" value="P:heme biosynthetic process"/>
    <property type="evidence" value="ECO:0007669"/>
    <property type="project" value="UniProtKB-KW"/>
</dbReference>
<dbReference type="Gene3D" id="3.30.70.1030">
    <property type="entry name" value="Apc35880, domain 1"/>
    <property type="match status" value="2"/>
</dbReference>
<dbReference type="HAMAP" id="MF_01442">
    <property type="entry name" value="Coproheme_decarbox_1"/>
    <property type="match status" value="1"/>
</dbReference>
<dbReference type="InterPro" id="IPR031332">
    <property type="entry name" value="CHDC"/>
</dbReference>
<dbReference type="InterPro" id="IPR010644">
    <property type="entry name" value="ChdC/CLD"/>
</dbReference>
<dbReference type="InterPro" id="IPR011008">
    <property type="entry name" value="Dimeric_a/b-barrel"/>
</dbReference>
<dbReference type="NCBIfam" id="NF008913">
    <property type="entry name" value="PRK12276.1"/>
    <property type="match status" value="1"/>
</dbReference>
<dbReference type="PANTHER" id="PTHR36843:SF1">
    <property type="entry name" value="COPROHEME DECARBOXYLASE"/>
    <property type="match status" value="1"/>
</dbReference>
<dbReference type="PANTHER" id="PTHR36843">
    <property type="entry name" value="HEME-DEPENDENT PEROXIDASE YWFI-RELATED"/>
    <property type="match status" value="1"/>
</dbReference>
<dbReference type="Pfam" id="PF06778">
    <property type="entry name" value="Chlor_dismutase"/>
    <property type="match status" value="1"/>
</dbReference>
<dbReference type="SUPFAM" id="SSF54909">
    <property type="entry name" value="Dimeric alpha+beta barrel"/>
    <property type="match status" value="1"/>
</dbReference>
<keyword id="KW-0349">Heme</keyword>
<keyword id="KW-0350">Heme biosynthesis</keyword>
<keyword id="KW-0408">Iron</keyword>
<keyword id="KW-0479">Metal-binding</keyword>
<keyword id="KW-0560">Oxidoreductase</keyword>
<accession>Q72HY0</accession>
<comment type="function">
    <text evidence="1">Involved in coproporphyrin-dependent heme b biosynthesis. Catalyzes the decarboxylation of Fe-coproporphyrin III (coproheme) to heme b (protoheme IX), the last step of the pathway. The reaction occurs in a stepwise manner with a three-propionate intermediate.</text>
</comment>
<comment type="catalytic activity">
    <reaction evidence="1">
        <text>Fe-coproporphyrin III + 2 H2O2 + 2 H(+) = heme b + 2 CO2 + 4 H2O</text>
        <dbReference type="Rhea" id="RHEA:56516"/>
        <dbReference type="ChEBI" id="CHEBI:15377"/>
        <dbReference type="ChEBI" id="CHEBI:15378"/>
        <dbReference type="ChEBI" id="CHEBI:16240"/>
        <dbReference type="ChEBI" id="CHEBI:16526"/>
        <dbReference type="ChEBI" id="CHEBI:60344"/>
        <dbReference type="ChEBI" id="CHEBI:68438"/>
        <dbReference type="EC" id="1.3.98.5"/>
    </reaction>
    <physiologicalReaction direction="left-to-right" evidence="1">
        <dbReference type="Rhea" id="RHEA:56517"/>
    </physiologicalReaction>
</comment>
<comment type="catalytic activity">
    <reaction evidence="1">
        <text>Fe-coproporphyrin III + H2O2 + H(+) = harderoheme III + CO2 + 2 H2O</text>
        <dbReference type="Rhea" id="RHEA:57940"/>
        <dbReference type="ChEBI" id="CHEBI:15377"/>
        <dbReference type="ChEBI" id="CHEBI:15378"/>
        <dbReference type="ChEBI" id="CHEBI:16240"/>
        <dbReference type="ChEBI" id="CHEBI:16526"/>
        <dbReference type="ChEBI" id="CHEBI:68438"/>
        <dbReference type="ChEBI" id="CHEBI:142463"/>
    </reaction>
    <physiologicalReaction direction="left-to-right" evidence="1">
        <dbReference type="Rhea" id="RHEA:57941"/>
    </physiologicalReaction>
</comment>
<comment type="catalytic activity">
    <reaction evidence="1">
        <text>harderoheme III + H2O2 + H(+) = heme b + CO2 + 2 H2O</text>
        <dbReference type="Rhea" id="RHEA:57944"/>
        <dbReference type="ChEBI" id="CHEBI:15377"/>
        <dbReference type="ChEBI" id="CHEBI:15378"/>
        <dbReference type="ChEBI" id="CHEBI:16240"/>
        <dbReference type="ChEBI" id="CHEBI:16526"/>
        <dbReference type="ChEBI" id="CHEBI:60344"/>
        <dbReference type="ChEBI" id="CHEBI:142463"/>
    </reaction>
    <physiologicalReaction direction="left-to-right" evidence="1">
        <dbReference type="Rhea" id="RHEA:57945"/>
    </physiologicalReaction>
</comment>
<comment type="cofactor">
    <cofactor evidence="1">
        <name>Fe-coproporphyrin III</name>
        <dbReference type="ChEBI" id="CHEBI:68438"/>
    </cofactor>
    <text evidence="1">Fe-coproporphyrin III acts both as a substrate and a redox cofactor.</text>
</comment>
<comment type="pathway">
    <text evidence="1">Porphyrin-containing compound metabolism; protoheme biosynthesis.</text>
</comment>
<comment type="similarity">
    <text evidence="1">Belongs to the ChdC family. Type 1 subfamily.</text>
</comment>